<geneLocation type="chloroplast"/>
<gene>
    <name type="primary">ycf29</name>
</gene>
<dbReference type="EMBL" id="AP006715">
    <property type="protein sequence ID" value="BAE92467.1"/>
    <property type="molecule type" value="Genomic_DNA"/>
</dbReference>
<dbReference type="RefSeq" id="YP_537024.1">
    <property type="nucleotide sequence ID" value="NC_007932.1"/>
</dbReference>
<dbReference type="SMR" id="Q1XDE4"/>
<dbReference type="GO" id="GO:0009507">
    <property type="term" value="C:chloroplast"/>
    <property type="evidence" value="ECO:0007669"/>
    <property type="project" value="UniProtKB-SubCell"/>
</dbReference>
<dbReference type="GO" id="GO:0003677">
    <property type="term" value="F:DNA binding"/>
    <property type="evidence" value="ECO:0007669"/>
    <property type="project" value="UniProtKB-KW"/>
</dbReference>
<dbReference type="GO" id="GO:0000155">
    <property type="term" value="F:phosphorelay sensor kinase activity"/>
    <property type="evidence" value="ECO:0007669"/>
    <property type="project" value="TreeGrafter"/>
</dbReference>
<dbReference type="GO" id="GO:0006355">
    <property type="term" value="P:regulation of DNA-templated transcription"/>
    <property type="evidence" value="ECO:0007669"/>
    <property type="project" value="InterPro"/>
</dbReference>
<dbReference type="CDD" id="cd06170">
    <property type="entry name" value="LuxR_C_like"/>
    <property type="match status" value="1"/>
</dbReference>
<dbReference type="CDD" id="cd19927">
    <property type="entry name" value="REC_Ycf29"/>
    <property type="match status" value="1"/>
</dbReference>
<dbReference type="Gene3D" id="3.40.50.2300">
    <property type="match status" value="1"/>
</dbReference>
<dbReference type="Gene3D" id="1.10.10.10">
    <property type="entry name" value="Winged helix-like DNA-binding domain superfamily/Winged helix DNA-binding domain"/>
    <property type="match status" value="1"/>
</dbReference>
<dbReference type="InterPro" id="IPR011006">
    <property type="entry name" value="CheY-like_superfamily"/>
</dbReference>
<dbReference type="InterPro" id="IPR016032">
    <property type="entry name" value="Sig_transdc_resp-reg_C-effctor"/>
</dbReference>
<dbReference type="InterPro" id="IPR001789">
    <property type="entry name" value="Sig_transdc_resp-reg_receiver"/>
</dbReference>
<dbReference type="InterPro" id="IPR000792">
    <property type="entry name" value="Tscrpt_reg_LuxR_C"/>
</dbReference>
<dbReference type="InterPro" id="IPR036388">
    <property type="entry name" value="WH-like_DNA-bd_sf"/>
</dbReference>
<dbReference type="PANTHER" id="PTHR43547:SF2">
    <property type="entry name" value="HYBRID SIGNAL TRANSDUCTION HISTIDINE KINASE C"/>
    <property type="match status" value="1"/>
</dbReference>
<dbReference type="PANTHER" id="PTHR43547">
    <property type="entry name" value="TWO-COMPONENT HISTIDINE KINASE"/>
    <property type="match status" value="1"/>
</dbReference>
<dbReference type="Pfam" id="PF00196">
    <property type="entry name" value="GerE"/>
    <property type="match status" value="1"/>
</dbReference>
<dbReference type="Pfam" id="PF00072">
    <property type="entry name" value="Response_reg"/>
    <property type="match status" value="1"/>
</dbReference>
<dbReference type="PRINTS" id="PR00038">
    <property type="entry name" value="HTHLUXR"/>
</dbReference>
<dbReference type="SMART" id="SM00421">
    <property type="entry name" value="HTH_LUXR"/>
    <property type="match status" value="1"/>
</dbReference>
<dbReference type="SMART" id="SM00448">
    <property type="entry name" value="REC"/>
    <property type="match status" value="1"/>
</dbReference>
<dbReference type="SUPFAM" id="SSF46894">
    <property type="entry name" value="C-terminal effector domain of the bipartite response regulators"/>
    <property type="match status" value="1"/>
</dbReference>
<dbReference type="SUPFAM" id="SSF52172">
    <property type="entry name" value="CheY-like"/>
    <property type="match status" value="1"/>
</dbReference>
<dbReference type="PROSITE" id="PS50043">
    <property type="entry name" value="HTH_LUXR_2"/>
    <property type="match status" value="1"/>
</dbReference>
<dbReference type="PROSITE" id="PS50110">
    <property type="entry name" value="RESPONSE_REGULATORY"/>
    <property type="match status" value="1"/>
</dbReference>
<name>YCF29_PYRYE</name>
<comment type="subcellular location">
    <subcellularLocation>
        <location>Plastid</location>
        <location>Chloroplast</location>
    </subcellularLocation>
</comment>
<protein>
    <recommendedName>
        <fullName>Probable transcriptional regulator ycf29</fullName>
    </recommendedName>
</protein>
<evidence type="ECO:0000255" key="1">
    <source>
        <dbReference type="PROSITE-ProRule" id="PRU00169"/>
    </source>
</evidence>
<evidence type="ECO:0000255" key="2">
    <source>
        <dbReference type="PROSITE-ProRule" id="PRU00411"/>
    </source>
</evidence>
<feature type="chain" id="PRO_0000277346" description="Probable transcriptional regulator ycf29">
    <location>
        <begin position="1"/>
        <end position="222"/>
    </location>
</feature>
<feature type="domain" description="Response regulatory" evidence="1">
    <location>
        <begin position="4"/>
        <end position="120"/>
    </location>
</feature>
<feature type="domain" description="HTH luxR-type" evidence="2">
    <location>
        <begin position="139"/>
        <end position="204"/>
    </location>
</feature>
<feature type="DNA-binding region" description="H-T-H motif" evidence="2">
    <location>
        <begin position="163"/>
        <end position="182"/>
    </location>
</feature>
<feature type="modified residue" description="4-aspartylphosphate" evidence="1">
    <location>
        <position position="53"/>
    </location>
</feature>
<keyword id="KW-0150">Chloroplast</keyword>
<keyword id="KW-0238">DNA-binding</keyword>
<keyword id="KW-0597">Phosphoprotein</keyword>
<keyword id="KW-0934">Plastid</keyword>
<keyword id="KW-0804">Transcription</keyword>
<keyword id="KW-0805">Transcription regulation</keyword>
<keyword id="KW-0902">Two-component regulatory system</keyword>
<reference key="1">
    <citation type="submission" date="2003-11" db="EMBL/GenBank/DDBJ databases">
        <title>Whole genome sequence of Porphyra yezoensis chloroplast.</title>
        <authorList>
            <person name="Kunimoto M."/>
            <person name="Morishima K."/>
            <person name="Yoshikawa M."/>
            <person name="Fukuda S."/>
            <person name="Kobayashi T."/>
            <person name="Kobayashi M."/>
            <person name="Okazaki T."/>
            <person name="Ohara I."/>
            <person name="Nakayama I."/>
        </authorList>
    </citation>
    <scope>NUCLEOTIDE SEQUENCE [LARGE SCALE GENOMIC DNA]</scope>
    <source>
        <strain>U-51</strain>
    </source>
</reference>
<proteinExistence type="inferred from homology"/>
<accession>Q1XDE4</accession>
<organism>
    <name type="scientific">Pyropia yezoensis</name>
    <name type="common">Susabi-nori</name>
    <name type="synonym">Porphyra yezoensis</name>
    <dbReference type="NCBI Taxonomy" id="2788"/>
    <lineage>
        <taxon>Eukaryota</taxon>
        <taxon>Rhodophyta</taxon>
        <taxon>Bangiophyceae</taxon>
        <taxon>Bangiales</taxon>
        <taxon>Bangiaceae</taxon>
        <taxon>Pyropia</taxon>
    </lineage>
</organism>
<sequence>MSYKLMLVENDIVLSKAIQEYLIDQGFNVYIANNGLEALNLAYQYNFDLIISDIMMPLVNGYELLAKLKKNKALSKIPVIFLTAKGMTKDRIKGYDMGCYGYLSKPFDPNELLSIINNLIARDVLKEASLQNSATSNQQLNHKIRLTPREKSILDLVVDGLTNKEISTILNTSVRNVEKYVSRLLHKTNMKNRTLLVKYSINNNLLNNEINERANDGTRTRE</sequence>